<protein>
    <recommendedName>
        <fullName evidence="1">Small ribosomal subunit protein uS10</fullName>
    </recommendedName>
    <alternativeName>
        <fullName evidence="2">30S ribosomal protein S10</fullName>
    </alternativeName>
</protein>
<comment type="function">
    <text evidence="1">Involved in the binding of tRNA to the ribosomes.</text>
</comment>
<comment type="subunit">
    <text evidence="1">Part of the 30S ribosomal subunit.</text>
</comment>
<comment type="similarity">
    <text evidence="1">Belongs to the universal ribosomal protein uS10 family.</text>
</comment>
<evidence type="ECO:0000255" key="1">
    <source>
        <dbReference type="HAMAP-Rule" id="MF_00508"/>
    </source>
</evidence>
<evidence type="ECO:0000305" key="2"/>
<proteinExistence type="inferred from homology"/>
<name>RS10_RICCN</name>
<keyword id="KW-0687">Ribonucleoprotein</keyword>
<keyword id="KW-0689">Ribosomal protein</keyword>
<organism>
    <name type="scientific">Rickettsia conorii (strain ATCC VR-613 / Malish 7)</name>
    <dbReference type="NCBI Taxonomy" id="272944"/>
    <lineage>
        <taxon>Bacteria</taxon>
        <taxon>Pseudomonadati</taxon>
        <taxon>Pseudomonadota</taxon>
        <taxon>Alphaproteobacteria</taxon>
        <taxon>Rickettsiales</taxon>
        <taxon>Rickettsiaceae</taxon>
        <taxon>Rickettsieae</taxon>
        <taxon>Rickettsia</taxon>
        <taxon>spotted fever group</taxon>
    </lineage>
</organism>
<dbReference type="EMBL" id="AE006914">
    <property type="protein sequence ID" value="AAL03545.1"/>
    <property type="molecule type" value="Genomic_DNA"/>
</dbReference>
<dbReference type="PIR" id="G97825">
    <property type="entry name" value="G97825"/>
</dbReference>
<dbReference type="RefSeq" id="WP_010977588.1">
    <property type="nucleotide sequence ID" value="NC_003103.1"/>
</dbReference>
<dbReference type="SMR" id="Q92GW5"/>
<dbReference type="GeneID" id="928149"/>
<dbReference type="KEGG" id="rco:RC1007"/>
<dbReference type="HOGENOM" id="CLU_122625_1_3_5"/>
<dbReference type="Proteomes" id="UP000000816">
    <property type="component" value="Chromosome"/>
</dbReference>
<dbReference type="GO" id="GO:1990904">
    <property type="term" value="C:ribonucleoprotein complex"/>
    <property type="evidence" value="ECO:0007669"/>
    <property type="project" value="UniProtKB-KW"/>
</dbReference>
<dbReference type="GO" id="GO:0005840">
    <property type="term" value="C:ribosome"/>
    <property type="evidence" value="ECO:0007669"/>
    <property type="project" value="UniProtKB-KW"/>
</dbReference>
<dbReference type="GO" id="GO:0003735">
    <property type="term" value="F:structural constituent of ribosome"/>
    <property type="evidence" value="ECO:0007669"/>
    <property type="project" value="InterPro"/>
</dbReference>
<dbReference type="GO" id="GO:0000049">
    <property type="term" value="F:tRNA binding"/>
    <property type="evidence" value="ECO:0007669"/>
    <property type="project" value="UniProtKB-UniRule"/>
</dbReference>
<dbReference type="GO" id="GO:0006412">
    <property type="term" value="P:translation"/>
    <property type="evidence" value="ECO:0007669"/>
    <property type="project" value="UniProtKB-UniRule"/>
</dbReference>
<dbReference type="FunFam" id="3.30.70.600:FF:000003">
    <property type="entry name" value="30S ribosomal protein S10"/>
    <property type="match status" value="1"/>
</dbReference>
<dbReference type="Gene3D" id="3.30.70.600">
    <property type="entry name" value="Ribosomal protein S10 domain"/>
    <property type="match status" value="1"/>
</dbReference>
<dbReference type="HAMAP" id="MF_00508">
    <property type="entry name" value="Ribosomal_uS10"/>
    <property type="match status" value="1"/>
</dbReference>
<dbReference type="InterPro" id="IPR001848">
    <property type="entry name" value="Ribosomal_uS10"/>
</dbReference>
<dbReference type="InterPro" id="IPR027486">
    <property type="entry name" value="Ribosomal_uS10_dom"/>
</dbReference>
<dbReference type="InterPro" id="IPR036838">
    <property type="entry name" value="Ribosomal_uS10_dom_sf"/>
</dbReference>
<dbReference type="NCBIfam" id="NF001861">
    <property type="entry name" value="PRK00596.1"/>
    <property type="match status" value="1"/>
</dbReference>
<dbReference type="NCBIfam" id="TIGR01049">
    <property type="entry name" value="rpsJ_bact"/>
    <property type="match status" value="1"/>
</dbReference>
<dbReference type="PANTHER" id="PTHR11700">
    <property type="entry name" value="30S RIBOSOMAL PROTEIN S10 FAMILY MEMBER"/>
    <property type="match status" value="1"/>
</dbReference>
<dbReference type="Pfam" id="PF00338">
    <property type="entry name" value="Ribosomal_S10"/>
    <property type="match status" value="1"/>
</dbReference>
<dbReference type="PRINTS" id="PR00971">
    <property type="entry name" value="RIBOSOMALS10"/>
</dbReference>
<dbReference type="SMART" id="SM01403">
    <property type="entry name" value="Ribosomal_S10"/>
    <property type="match status" value="1"/>
</dbReference>
<dbReference type="SUPFAM" id="SSF54999">
    <property type="entry name" value="Ribosomal protein S10"/>
    <property type="match status" value="1"/>
</dbReference>
<feature type="chain" id="PRO_0000146586" description="Small ribosomal subunit protein uS10">
    <location>
        <begin position="1"/>
        <end position="105"/>
    </location>
</feature>
<accession>Q92GW5</accession>
<reference key="1">
    <citation type="journal article" date="2001" name="Science">
        <title>Mechanisms of evolution in Rickettsia conorii and R. prowazekii.</title>
        <authorList>
            <person name="Ogata H."/>
            <person name="Audic S."/>
            <person name="Renesto-Audiffren P."/>
            <person name="Fournier P.-E."/>
            <person name="Barbe V."/>
            <person name="Samson D."/>
            <person name="Roux V."/>
            <person name="Cossart P."/>
            <person name="Weissenbach J."/>
            <person name="Claverie J.-M."/>
            <person name="Raoult D."/>
        </authorList>
    </citation>
    <scope>NUCLEOTIDE SEQUENCE [LARGE SCALE GENOMIC DNA]</scope>
    <source>
        <strain>ATCC VR-613 / Malish 7</strain>
    </source>
</reference>
<gene>
    <name evidence="1" type="primary">rpsJ</name>
    <name type="ordered locus">RC1007</name>
</gene>
<sequence>MKNKIKIRLKSFDHRSLDQATKEIVSAVKRTFANINGPIPLPKKIGRFTVNRSPHVHKKSREQFEIRKHKRLLVIGDPNPAVVDALSKVDLAAGVDVVIELESGE</sequence>